<sequence length="196" mass="22284">MSQSISLKGSTRTVTEFFEYSINSILYQRGVYPAEDFVTVKKYDLTLLKTHDDELKDYIRKILLQVHRWLLGGKCNQLVLCIVDKDEGEVVERWSFNVQHISGNSNGQDDVVDLNTTQSQIRALIRQITSSVTFLPELTKEGGYTFTVLAYTDADAKVPLEWADSNSKEIPDGEVVQFKTFSTNDHKVGAQVSYKY</sequence>
<dbReference type="EMBL" id="U14132">
    <property type="protein sequence ID" value="AAA21385.1"/>
    <property type="molecule type" value="Genomic_DNA"/>
</dbReference>
<dbReference type="EMBL" id="Z49305">
    <property type="protein sequence ID" value="CAA89321.1"/>
    <property type="molecule type" value="Genomic_DNA"/>
</dbReference>
<dbReference type="EMBL" id="AY558243">
    <property type="protein sequence ID" value="AAS56569.1"/>
    <property type="molecule type" value="Genomic_DNA"/>
</dbReference>
<dbReference type="EMBL" id="BK006943">
    <property type="protein sequence ID" value="DAA08768.1"/>
    <property type="molecule type" value="Genomic_DNA"/>
</dbReference>
<dbReference type="PIR" id="S48302">
    <property type="entry name" value="S48302"/>
</dbReference>
<dbReference type="RefSeq" id="NP_012504.3">
    <property type="nucleotide sequence ID" value="NM_001181464.3"/>
</dbReference>
<dbReference type="SMR" id="P40958"/>
<dbReference type="BioGRID" id="33729">
    <property type="interactions" value="402"/>
</dbReference>
<dbReference type="ComplexPortal" id="CPX-3212">
    <property type="entry name" value="Mitotic checkpoint complex, MAD1-MAD2-BUB1-BUB3 subcomplex"/>
</dbReference>
<dbReference type="ComplexPortal" id="CPX-961">
    <property type="entry name" value="Mitotic spindle assembly checkpoint, MAD1-MAD2 complex"/>
</dbReference>
<dbReference type="ComplexPortal" id="CPX-962">
    <property type="entry name" value="Mitotic checkpoint complex, CDC20-MAD2 subcomplex"/>
</dbReference>
<dbReference type="ComplexPortal" id="CPX-963">
    <property type="entry name" value="Mitotic checkpoint complex, MAD2-MAD3-BUB3-CDC20"/>
</dbReference>
<dbReference type="DIP" id="DIP-815N"/>
<dbReference type="FunCoup" id="P40958">
    <property type="interactions" value="1411"/>
</dbReference>
<dbReference type="IntAct" id="P40958">
    <property type="interactions" value="30"/>
</dbReference>
<dbReference type="MINT" id="P40958"/>
<dbReference type="STRING" id="4932.YJL030W"/>
<dbReference type="iPTMnet" id="P40958"/>
<dbReference type="PaxDb" id="4932-YJL030W"/>
<dbReference type="PeptideAtlas" id="P40958"/>
<dbReference type="EnsemblFungi" id="YJL030W_mRNA">
    <property type="protein sequence ID" value="YJL030W"/>
    <property type="gene ID" value="YJL030W"/>
</dbReference>
<dbReference type="GeneID" id="853422"/>
<dbReference type="KEGG" id="sce:YJL030W"/>
<dbReference type="AGR" id="SGD:S000003567"/>
<dbReference type="SGD" id="S000003567">
    <property type="gene designation" value="MAD2"/>
</dbReference>
<dbReference type="VEuPathDB" id="FungiDB:YJL030W"/>
<dbReference type="eggNOG" id="KOG3285">
    <property type="taxonomic scope" value="Eukaryota"/>
</dbReference>
<dbReference type="GeneTree" id="ENSGT00940000153395"/>
<dbReference type="HOGENOM" id="CLU_072097_0_0_1"/>
<dbReference type="InParanoid" id="P40958"/>
<dbReference type="OMA" id="WQFDVEI"/>
<dbReference type="OrthoDB" id="1806at2759"/>
<dbReference type="BioCyc" id="YEAST:G3O-31499-MONOMER"/>
<dbReference type="Reactome" id="R-SCE-141405">
    <property type="pathway name" value="Inhibition of the proteolytic activity of APC/C required for the onset of anaphase by mitotic spindle checkpoint components"/>
</dbReference>
<dbReference type="Reactome" id="R-SCE-141430">
    <property type="pathway name" value="Inactivation of APC/C via direct inhibition of the APC/C complex"/>
</dbReference>
<dbReference type="BioGRID-ORCS" id="853422">
    <property type="hits" value="0 hits in 10 CRISPR screens"/>
</dbReference>
<dbReference type="PRO" id="PR:P40958"/>
<dbReference type="Proteomes" id="UP000002311">
    <property type="component" value="Chromosome X"/>
</dbReference>
<dbReference type="RNAct" id="P40958">
    <property type="molecule type" value="protein"/>
</dbReference>
<dbReference type="GO" id="GO:0005737">
    <property type="term" value="C:cytoplasm"/>
    <property type="evidence" value="ECO:0000318"/>
    <property type="project" value="GO_Central"/>
</dbReference>
<dbReference type="GO" id="GO:0000776">
    <property type="term" value="C:kinetochore"/>
    <property type="evidence" value="ECO:0000314"/>
    <property type="project" value="ComplexPortal"/>
</dbReference>
<dbReference type="GO" id="GO:0033597">
    <property type="term" value="C:mitotic checkpoint complex"/>
    <property type="evidence" value="ECO:0000314"/>
    <property type="project" value="SGD"/>
</dbReference>
<dbReference type="GO" id="GO:1990333">
    <property type="term" value="C:mitotic checkpoint complex, CDC20-MAD2 subcomplex"/>
    <property type="evidence" value="ECO:0000353"/>
    <property type="project" value="ComplexPortal"/>
</dbReference>
<dbReference type="GO" id="GO:0005654">
    <property type="term" value="C:nucleoplasm"/>
    <property type="evidence" value="ECO:0000318"/>
    <property type="project" value="GO_Central"/>
</dbReference>
<dbReference type="GO" id="GO:0051301">
    <property type="term" value="P:cell division"/>
    <property type="evidence" value="ECO:0007669"/>
    <property type="project" value="UniProtKB-KW"/>
</dbReference>
<dbReference type="GO" id="GO:0044774">
    <property type="term" value="P:mitotic DNA integrity checkpoint signaling"/>
    <property type="evidence" value="ECO:0000316"/>
    <property type="project" value="SGD"/>
</dbReference>
<dbReference type="GO" id="GO:0007094">
    <property type="term" value="P:mitotic spindle assembly checkpoint signaling"/>
    <property type="evidence" value="ECO:0000314"/>
    <property type="project" value="ComplexPortal"/>
</dbReference>
<dbReference type="GO" id="GO:1902499">
    <property type="term" value="P:positive regulation of protein autoubiquitination"/>
    <property type="evidence" value="ECO:0000314"/>
    <property type="project" value="SGD"/>
</dbReference>
<dbReference type="FunFam" id="3.30.900.10:FF:000002">
    <property type="entry name" value="Mitotic spindle assembly checkpoint protein MAD2A"/>
    <property type="match status" value="1"/>
</dbReference>
<dbReference type="Gene3D" id="3.30.900.10">
    <property type="entry name" value="HORMA domain"/>
    <property type="match status" value="1"/>
</dbReference>
<dbReference type="InterPro" id="IPR003511">
    <property type="entry name" value="HORMA_dom"/>
</dbReference>
<dbReference type="InterPro" id="IPR036570">
    <property type="entry name" value="HORMA_dom_sf"/>
</dbReference>
<dbReference type="InterPro" id="IPR045091">
    <property type="entry name" value="Mad2-like"/>
</dbReference>
<dbReference type="PANTHER" id="PTHR11842">
    <property type="entry name" value="MITOTIC SPINDLE ASSEMBLY CHECKPOINT PROTEIN MAD2"/>
    <property type="match status" value="1"/>
</dbReference>
<dbReference type="PANTHER" id="PTHR11842:SF11">
    <property type="entry name" value="MITOTIC SPINDLE ASSEMBLY CHECKPOINT PROTEIN MAD2A"/>
    <property type="match status" value="1"/>
</dbReference>
<dbReference type="Pfam" id="PF02301">
    <property type="entry name" value="HORMA"/>
    <property type="match status" value="1"/>
</dbReference>
<dbReference type="SUPFAM" id="SSF56019">
    <property type="entry name" value="The spindle assembly checkpoint protein mad2"/>
    <property type="match status" value="1"/>
</dbReference>
<dbReference type="PROSITE" id="PS50815">
    <property type="entry name" value="HORMA"/>
    <property type="match status" value="1"/>
</dbReference>
<proteinExistence type="evidence at protein level"/>
<reference key="1">
    <citation type="journal article" date="1993" name="Nature">
        <title>The mitotic feedback control gene MAD2 encodes the alpha-subunit of a prenyltransferase.</title>
        <authorList>
            <person name="Li R."/>
            <person name="Havel C."/>
            <person name="Watson J.A."/>
            <person name="Murray A.W."/>
        </authorList>
    </citation>
    <scope>NUCLEOTIDE SEQUENCE [GENOMIC DNA]</scope>
    <scope>FUNCTION</scope>
</reference>
<reference key="2">
    <citation type="journal article" date="1996" name="EMBO J.">
        <title>Complete nucleotide sequence of Saccharomyces cerevisiae chromosome X.</title>
        <authorList>
            <person name="Galibert F."/>
            <person name="Alexandraki D."/>
            <person name="Baur A."/>
            <person name="Boles E."/>
            <person name="Chalwatzis N."/>
            <person name="Chuat J.-C."/>
            <person name="Coster F."/>
            <person name="Cziepluch C."/>
            <person name="de Haan M."/>
            <person name="Domdey H."/>
            <person name="Durand P."/>
            <person name="Entian K.-D."/>
            <person name="Gatius M."/>
            <person name="Goffeau A."/>
            <person name="Grivell L.A."/>
            <person name="Hennemann A."/>
            <person name="Herbert C.J."/>
            <person name="Heumann K."/>
            <person name="Hilger F."/>
            <person name="Hollenberg C.P."/>
            <person name="Huang M.-E."/>
            <person name="Jacq C."/>
            <person name="Jauniaux J.-C."/>
            <person name="Katsoulou C."/>
            <person name="Kirchrath L."/>
            <person name="Kleine K."/>
            <person name="Kordes E."/>
            <person name="Koetter P."/>
            <person name="Liebl S."/>
            <person name="Louis E.J."/>
            <person name="Manus V."/>
            <person name="Mewes H.-W."/>
            <person name="Miosga T."/>
            <person name="Obermaier B."/>
            <person name="Perea J."/>
            <person name="Pohl T.M."/>
            <person name="Portetelle D."/>
            <person name="Pujol A."/>
            <person name="Purnelle B."/>
            <person name="Ramezani Rad M."/>
            <person name="Rasmussen S.W."/>
            <person name="Rose M."/>
            <person name="Rossau R."/>
            <person name="Schaaff-Gerstenschlaeger I."/>
            <person name="Smits P.H.M."/>
            <person name="Scarcez T."/>
            <person name="Soriano N."/>
            <person name="To Van D."/>
            <person name="Tzermia M."/>
            <person name="Van Broekhoven A."/>
            <person name="Vandenbol M."/>
            <person name="Wedler H."/>
            <person name="von Wettstein D."/>
            <person name="Wambutt R."/>
            <person name="Zagulski M."/>
            <person name="Zollner A."/>
            <person name="Karpfinger-Hartl L."/>
        </authorList>
    </citation>
    <scope>NUCLEOTIDE SEQUENCE [LARGE SCALE GENOMIC DNA]</scope>
    <source>
        <strain>ATCC 204508 / S288c</strain>
    </source>
</reference>
<reference key="3">
    <citation type="journal article" date="2014" name="G3 (Bethesda)">
        <title>The reference genome sequence of Saccharomyces cerevisiae: Then and now.</title>
        <authorList>
            <person name="Engel S.R."/>
            <person name="Dietrich F.S."/>
            <person name="Fisk D.G."/>
            <person name="Binkley G."/>
            <person name="Balakrishnan R."/>
            <person name="Costanzo M.C."/>
            <person name="Dwight S.S."/>
            <person name="Hitz B.C."/>
            <person name="Karra K."/>
            <person name="Nash R.S."/>
            <person name="Weng S."/>
            <person name="Wong E.D."/>
            <person name="Lloyd P."/>
            <person name="Skrzypek M.S."/>
            <person name="Miyasato S.R."/>
            <person name="Simison M."/>
            <person name="Cherry J.M."/>
        </authorList>
    </citation>
    <scope>GENOME REANNOTATION</scope>
    <source>
        <strain>ATCC 204508 / S288c</strain>
    </source>
</reference>
<reference key="4">
    <citation type="journal article" date="2007" name="Genome Res.">
        <title>Approaching a complete repository of sequence-verified protein-encoding clones for Saccharomyces cerevisiae.</title>
        <authorList>
            <person name="Hu Y."/>
            <person name="Rolfs A."/>
            <person name="Bhullar B."/>
            <person name="Murthy T.V.S."/>
            <person name="Zhu C."/>
            <person name="Berger M.F."/>
            <person name="Camargo A.A."/>
            <person name="Kelley F."/>
            <person name="McCarron S."/>
            <person name="Jepson D."/>
            <person name="Richardson A."/>
            <person name="Raphael J."/>
            <person name="Moreira D."/>
            <person name="Taycher E."/>
            <person name="Zuo D."/>
            <person name="Mohr S."/>
            <person name="Kane M.F."/>
            <person name="Williamson J."/>
            <person name="Simpson A.J.G."/>
            <person name="Bulyk M.L."/>
            <person name="Harlow E."/>
            <person name="Marsischky G."/>
            <person name="Kolodner R.D."/>
            <person name="LaBaer J."/>
        </authorList>
    </citation>
    <scope>NUCLEOTIDE SEQUENCE [GENOMIC DNA]</scope>
    <source>
        <strain>ATCC 204508 / S288c</strain>
    </source>
</reference>
<reference key="5">
    <citation type="journal article" date="1991" name="Cell">
        <title>Feedback control of mitosis in budding yeast.</title>
        <authorList>
            <person name="Li R."/>
            <person name="Murray A.W."/>
        </authorList>
    </citation>
    <scope>CHARACTERIZATION</scope>
</reference>
<reference key="6">
    <citation type="journal article" date="1998" name="Science">
        <title>Budding yeast Cdc20: a target of the spindle checkpoint.</title>
        <authorList>
            <person name="Hwang L.H."/>
            <person name="Lau L.F."/>
            <person name="Smith D.L."/>
            <person name="Mistrot C.A."/>
            <person name="Hardwick K.G."/>
            <person name="Hwang E.S."/>
            <person name="Amon A."/>
            <person name="Murray A.W."/>
        </authorList>
    </citation>
    <scope>INTERACTION WITH CDC20</scope>
</reference>
<reference key="7">
    <citation type="journal article" date="1999" name="Mol. Biol. Cell">
        <title>The spindle checkpoint of budding yeast depends on a tight complex between the Mad1 and Mad2 proteins.</title>
        <authorList>
            <person name="Chen R.H."/>
            <person name="Brady D.M."/>
            <person name="Smith D."/>
            <person name="Murray A.W."/>
            <person name="Hardwick K.G."/>
        </authorList>
    </citation>
    <scope>INTERACTION WITH MAD1</scope>
</reference>
<reference key="8">
    <citation type="journal article" date="2001" name="EMBO J.">
        <title>Bub3 interaction with Mad2, Mad3 and Cdc20 is mediated by WD40 repeats and does not require intact kinetochores.</title>
        <authorList>
            <person name="Fraschini R."/>
            <person name="Beretta A."/>
            <person name="Sironi L."/>
            <person name="Musacchio A."/>
            <person name="Lucchini G."/>
            <person name="Piatti S."/>
        </authorList>
    </citation>
    <scope>INTERACTION WITH BUB3</scope>
    <scope>IDENTIFICATION IN THE MCC COMPLEX</scope>
</reference>
<reference key="9">
    <citation type="journal article" date="2003" name="Nature">
        <title>Global analysis of protein expression in yeast.</title>
        <authorList>
            <person name="Ghaemmaghami S."/>
            <person name="Huh W.-K."/>
            <person name="Bower K."/>
            <person name="Howson R.W."/>
            <person name="Belle A."/>
            <person name="Dephoure N."/>
            <person name="O'Shea E.K."/>
            <person name="Weissman J.S."/>
        </authorList>
    </citation>
    <scope>LEVEL OF PROTEIN EXPRESSION [LARGE SCALE ANALYSIS]</scope>
</reference>
<reference key="10">
    <citation type="journal article" date="2005" name="Eukaryot. Cell">
        <title>Two complexes of spindle checkpoint proteins containing Cdc20 and Mad2 assemble during mitosis independently of the kinetochore in Saccharomyces cerevisiae.</title>
        <authorList>
            <person name="Poddar A."/>
            <person name="Stukenberg P.T."/>
            <person name="Burke D.J."/>
        </authorList>
    </citation>
    <scope>IDENTIFICATION IN THE MCC COMPLEX</scope>
    <scope>IDENTIFICATION IN THE MAD2-CDC20 COMPLEX</scope>
    <scope>FUNCTION OF THE MCC COMPLEX</scope>
</reference>
<evidence type="ECO:0000255" key="1">
    <source>
        <dbReference type="PROSITE-ProRule" id="PRU00109"/>
    </source>
</evidence>
<evidence type="ECO:0000269" key="2">
    <source>
    </source>
</evidence>
<evidence type="ECO:0000269" key="3">
    <source>
    </source>
</evidence>
<evidence type="ECO:0000269" key="4">
    <source>
    </source>
</evidence>
<evidence type="ECO:0000269" key="5">
    <source>
    </source>
</evidence>
<evidence type="ECO:0000269" key="6">
    <source>
    </source>
</evidence>
<evidence type="ECO:0000269" key="7">
    <source>
    </source>
</evidence>
<evidence type="ECO:0000305" key="8"/>
<name>MAD2_YEAST</name>
<accession>P40958</accession>
<accession>D6VWF2</accession>
<gene>
    <name type="primary">MAD2</name>
    <name type="ordered locus">YJL030W</name>
    <name type="ORF">J1256</name>
</gene>
<protein>
    <recommendedName>
        <fullName>Mitotic spindle checkpoint component MAD2</fullName>
        <shortName>Mitotic MAD2 protein</shortName>
    </recommendedName>
</protein>
<comment type="function">
    <text evidence="5 6">Central component of the spindle assembly checkpoint which is a feedback control that prevents cells with incompletely assembled spindles from leaving mitosis. Thought to be recruited to unattached kinetochores by MAD1. During checkpoint activity, MAD2 is relayed from the MAD1-MAD2 complex to the mitotic checkpoint complex (MCC). MCC and presumably the MAD2-CDC20 subcomplex inhibit the ubiquitin ligase activity of the anaphase promoting complex/cyclosome (APC/C) by preventing its activation by CDC20.</text>
</comment>
<comment type="subunit">
    <text evidence="2 3 5 7">Component of the mitotic checkpoint complex (MCC) which consists of MAD2, MAD3, BUB3 and CDC20, and of the MAD2-CDC20 subcomplex, both of which appear to be assembled during mitoisis independently of the kinetochore. In mitose-arrested cells, MAD2-CDC20 occurs in a larger amount than MCC. Interacts with CDC20 and BUB3.</text>
</comment>
<comment type="interaction">
    <interactant intactId="EBI-10362">
        <id>P40958</id>
    </interactant>
    <interactant intactId="EBI-3830">
        <id>P26449</id>
        <label>BUB3</label>
    </interactant>
    <organismsDiffer>false</organismsDiffer>
    <experiments>4</experiments>
</comment>
<comment type="interaction">
    <interactant intactId="EBI-10362">
        <id>P40958</id>
    </interactant>
    <interactant intactId="EBI-4212">
        <id>P26309</id>
        <label>CDC20</label>
    </interactant>
    <organismsDiffer>false</organismsDiffer>
    <experiments>6</experiments>
</comment>
<comment type="interaction">
    <interactant intactId="EBI-10362">
        <id>P40958</id>
    </interactant>
    <interactant intactId="EBI-10354">
        <id>P40957</id>
        <label>MAD1</label>
    </interactant>
    <organismsDiffer>false</organismsDiffer>
    <experiments>7</experiments>
</comment>
<comment type="interaction">
    <interactant intactId="EBI-10362">
        <id>P40958</id>
    </interactant>
    <interactant intactId="EBI-10369">
        <id>P47074</id>
        <label>MAD3</label>
    </interactant>
    <organismsDiffer>false</organismsDiffer>
    <experiments>3</experiments>
</comment>
<comment type="subcellular location">
    <subcellularLocation>
        <location>Nucleus</location>
    </subcellularLocation>
</comment>
<comment type="miscellaneous">
    <text evidence="4">Present with 1110 molecules/cell in log phase SD medium.</text>
</comment>
<comment type="similarity">
    <text evidence="8">Belongs to the MAD2 family.</text>
</comment>
<organism>
    <name type="scientific">Saccharomyces cerevisiae (strain ATCC 204508 / S288c)</name>
    <name type="common">Baker's yeast</name>
    <dbReference type="NCBI Taxonomy" id="559292"/>
    <lineage>
        <taxon>Eukaryota</taxon>
        <taxon>Fungi</taxon>
        <taxon>Dikarya</taxon>
        <taxon>Ascomycota</taxon>
        <taxon>Saccharomycotina</taxon>
        <taxon>Saccharomycetes</taxon>
        <taxon>Saccharomycetales</taxon>
        <taxon>Saccharomycetaceae</taxon>
        <taxon>Saccharomyces</taxon>
    </lineage>
</organism>
<keyword id="KW-0131">Cell cycle</keyword>
<keyword id="KW-0132">Cell division</keyword>
<keyword id="KW-0498">Mitosis</keyword>
<keyword id="KW-0539">Nucleus</keyword>
<keyword id="KW-1185">Reference proteome</keyword>
<feature type="chain" id="PRO_0000126115" description="Mitotic spindle checkpoint component MAD2">
    <location>
        <begin position="1"/>
        <end position="196"/>
    </location>
</feature>
<feature type="domain" description="HORMA" evidence="1">
    <location>
        <begin position="8"/>
        <end position="192"/>
    </location>
</feature>